<comment type="interaction">
    <interactant intactId="EBI-26982">
        <id>P36015</id>
    </interactant>
    <interactant intactId="EBI-13098">
        <id>P32854</id>
        <label>PEP12</label>
    </interactant>
    <organismsDiffer>false</organismsDiffer>
    <experiments>2</experiments>
</comment>
<comment type="interaction">
    <interactant intactId="EBI-26982">
        <id>P36015</id>
    </interactant>
    <interactant intactId="EBI-20519">
        <id>Q04338</id>
        <label>VTI1</label>
    </interactant>
    <organismsDiffer>false</organismsDiffer>
    <experiments>6</experiments>
</comment>
<comment type="subcellular location">
    <subcellularLocation>
        <location evidence="4">Cell membrane</location>
        <topology evidence="4">Lipid-anchor</topology>
        <orientation evidence="4">Cytoplasmic side</orientation>
    </subcellularLocation>
</comment>
<comment type="similarity">
    <text evidence="4">Belongs to the synaptobrevin family.</text>
</comment>
<sequence length="200" mass="22707">MRIYYIGVFRSGGEKALELSEVKDLSQFGFFERSSVGQFMTFFAETVASRTGAGQRQSIEEGNYIGHVYARSEGICGVLITDKEYPVRPAYTLLNKILDEYLVAHPKEEWADVTETNDALKMKQLDTYISKYQDPSQADAIMKVQQELDETKIVLHKTIENVLQRGEKLDNLVDKSESLTASSKMFYKQAKKSNSCCIIM</sequence>
<gene>
    <name type="primary">YKT6</name>
    <name type="ordered locus">YKL196C</name>
</gene>
<feature type="chain" id="PRO_0000206781" description="Synaptobrevin homolog YKT6">
    <location>
        <begin position="1"/>
        <end position="197"/>
    </location>
</feature>
<feature type="propeptide" id="PRO_0000396675" description="Removed in mature form" evidence="1">
    <location>
        <begin position="198"/>
        <end position="200"/>
    </location>
</feature>
<feature type="domain" description="Longin" evidence="2">
    <location>
        <begin position="7"/>
        <end position="129"/>
    </location>
</feature>
<feature type="domain" description="v-SNARE coiled-coil homology" evidence="3">
    <location>
        <begin position="140"/>
        <end position="200"/>
    </location>
</feature>
<feature type="modified residue" description="Phosphothreonine" evidence="5 6">
    <location>
        <position position="158"/>
    </location>
</feature>
<feature type="modified residue" description="Cysteine methyl ester" evidence="1">
    <location>
        <position position="197"/>
    </location>
</feature>
<feature type="lipid moiety-binding region" description="S-palmitoyl cysteine" evidence="1">
    <location>
        <position position="196"/>
    </location>
</feature>
<feature type="lipid moiety-binding region" description="S-farnesyl cysteine" evidence="1">
    <location>
        <position position="197"/>
    </location>
</feature>
<feature type="strand" evidence="9">
    <location>
        <begin position="3"/>
        <end position="10"/>
    </location>
</feature>
<feature type="strand" evidence="9">
    <location>
        <begin position="13"/>
        <end position="15"/>
    </location>
</feature>
<feature type="strand" evidence="9">
    <location>
        <begin position="17"/>
        <end position="23"/>
    </location>
</feature>
<feature type="strand" evidence="7">
    <location>
        <begin position="26"/>
        <end position="28"/>
    </location>
</feature>
<feature type="turn" evidence="9">
    <location>
        <begin position="30"/>
        <end position="34"/>
    </location>
</feature>
<feature type="helix" evidence="9">
    <location>
        <begin position="35"/>
        <end position="50"/>
    </location>
</feature>
<feature type="strand" evidence="9">
    <location>
        <begin position="55"/>
        <end position="61"/>
    </location>
</feature>
<feature type="strand" evidence="9">
    <location>
        <begin position="64"/>
        <end position="70"/>
    </location>
</feature>
<feature type="strand" evidence="9">
    <location>
        <begin position="74"/>
        <end position="82"/>
    </location>
</feature>
<feature type="helix" evidence="9">
    <location>
        <begin position="87"/>
        <end position="104"/>
    </location>
</feature>
<feature type="helix" evidence="9">
    <location>
        <begin position="107"/>
        <end position="109"/>
    </location>
</feature>
<feature type="turn" evidence="9">
    <location>
        <begin position="110"/>
        <end position="112"/>
    </location>
</feature>
<feature type="helix" evidence="9">
    <location>
        <begin position="118"/>
        <end position="120"/>
    </location>
</feature>
<feature type="helix" evidence="9">
    <location>
        <begin position="124"/>
        <end position="131"/>
    </location>
</feature>
<feature type="helix" evidence="8">
    <location>
        <begin position="137"/>
        <end position="139"/>
    </location>
</feature>
<organism>
    <name type="scientific">Saccharomyces cerevisiae (strain ATCC 204508 / S288c)</name>
    <name type="common">Baker's yeast</name>
    <dbReference type="NCBI Taxonomy" id="559292"/>
    <lineage>
        <taxon>Eukaryota</taxon>
        <taxon>Fungi</taxon>
        <taxon>Dikarya</taxon>
        <taxon>Ascomycota</taxon>
        <taxon>Saccharomycotina</taxon>
        <taxon>Saccharomycetes</taxon>
        <taxon>Saccharomycetales</taxon>
        <taxon>Saccharomycetaceae</taxon>
        <taxon>Saccharomyces</taxon>
    </lineage>
</organism>
<evidence type="ECO:0000250" key="1"/>
<evidence type="ECO:0000255" key="2">
    <source>
        <dbReference type="PROSITE-ProRule" id="PRU00231"/>
    </source>
</evidence>
<evidence type="ECO:0000255" key="3">
    <source>
        <dbReference type="PROSITE-ProRule" id="PRU00290"/>
    </source>
</evidence>
<evidence type="ECO:0000305" key="4"/>
<evidence type="ECO:0007744" key="5">
    <source>
    </source>
</evidence>
<evidence type="ECO:0007744" key="6">
    <source>
    </source>
</evidence>
<evidence type="ECO:0007829" key="7">
    <source>
        <dbReference type="PDB" id="1H8M"/>
    </source>
</evidence>
<evidence type="ECO:0007829" key="8">
    <source>
        <dbReference type="PDB" id="1IOU"/>
    </source>
</evidence>
<evidence type="ECO:0007829" key="9">
    <source>
        <dbReference type="PDB" id="3BW6"/>
    </source>
</evidence>
<dbReference type="EC" id="2.3.1.-"/>
<dbReference type="EMBL" id="Z28196">
    <property type="protein sequence ID" value="CAA82040.1"/>
    <property type="molecule type" value="Genomic_DNA"/>
</dbReference>
<dbReference type="EMBL" id="AY558393">
    <property type="protein sequence ID" value="AAS56719.1"/>
    <property type="molecule type" value="Genomic_DNA"/>
</dbReference>
<dbReference type="EMBL" id="BK006944">
    <property type="protein sequence ID" value="DAA08970.1"/>
    <property type="molecule type" value="Genomic_DNA"/>
</dbReference>
<dbReference type="PIR" id="S38033">
    <property type="entry name" value="S38033"/>
</dbReference>
<dbReference type="RefSeq" id="NP_012725.1">
    <property type="nucleotide sequence ID" value="NM_001179762.1"/>
</dbReference>
<dbReference type="PDB" id="1H8M">
    <property type="method" value="NMR"/>
    <property type="chains" value="A=1-140"/>
</dbReference>
<dbReference type="PDB" id="1IOU">
    <property type="method" value="NMR"/>
    <property type="chains" value="A=1-140"/>
</dbReference>
<dbReference type="PDB" id="3BW6">
    <property type="method" value="X-ray"/>
    <property type="resolution" value="2.50 A"/>
    <property type="chains" value="A=1-140"/>
</dbReference>
<dbReference type="PDBsum" id="1H8M"/>
<dbReference type="PDBsum" id="1IOU"/>
<dbReference type="PDBsum" id="3BW6"/>
<dbReference type="SMR" id="P36015"/>
<dbReference type="BioGRID" id="33925">
    <property type="interactions" value="590"/>
</dbReference>
<dbReference type="ComplexPortal" id="CPX-1855">
    <property type="entry name" value="Golgi SNARE complex SED5-GOS1-SFT1-YKT6"/>
</dbReference>
<dbReference type="ComplexPortal" id="CPX-1887">
    <property type="entry name" value="Vacuolar SNARE complex VAM3-VTI1-VAM7-YKT6"/>
</dbReference>
<dbReference type="ComplexPortal" id="CPX-5421">
    <property type="entry name" value="Endosomal SNARE complex PEP12-VTI1-SYN8-YKT6"/>
</dbReference>
<dbReference type="ComplexPortal" id="CPX-5422">
    <property type="entry name" value="Endosomal SNARE complex PEP12-VTI1-TLG1-YKT6"/>
</dbReference>
<dbReference type="DIP" id="DIP-2247N"/>
<dbReference type="FunCoup" id="P36015">
    <property type="interactions" value="1519"/>
</dbReference>
<dbReference type="IntAct" id="P36015">
    <property type="interactions" value="60"/>
</dbReference>
<dbReference type="MINT" id="P36015"/>
<dbReference type="STRING" id="4932.YKL196C"/>
<dbReference type="CarbonylDB" id="P36015"/>
<dbReference type="iPTMnet" id="P36015"/>
<dbReference type="PaxDb" id="4932-YKL196C"/>
<dbReference type="PeptideAtlas" id="P36015"/>
<dbReference type="EnsemblFungi" id="YKL196C_mRNA">
    <property type="protein sequence ID" value="YKL196C"/>
    <property type="gene ID" value="YKL196C"/>
</dbReference>
<dbReference type="GeneID" id="853638"/>
<dbReference type="KEGG" id="sce:YKL196C"/>
<dbReference type="AGR" id="SGD:S000001679"/>
<dbReference type="SGD" id="S000001679">
    <property type="gene designation" value="YKT6"/>
</dbReference>
<dbReference type="VEuPathDB" id="FungiDB:YKL196C"/>
<dbReference type="eggNOG" id="KOG0861">
    <property type="taxonomic scope" value="Eukaryota"/>
</dbReference>
<dbReference type="GeneTree" id="ENSGT00390000015164"/>
<dbReference type="HOGENOM" id="CLU_074848_0_1_1"/>
<dbReference type="InParanoid" id="P36015"/>
<dbReference type="OMA" id="HYIGIIR"/>
<dbReference type="OrthoDB" id="27923at2759"/>
<dbReference type="BioCyc" id="YEAST:G3O-31958-MONOMER"/>
<dbReference type="Reactome" id="R-SCE-204005">
    <property type="pathway name" value="COPII-mediated vesicle transport"/>
</dbReference>
<dbReference type="Reactome" id="R-SCE-6807878">
    <property type="pathway name" value="COPI-mediated anterograde transport"/>
</dbReference>
<dbReference type="Reactome" id="R-SCE-6811438">
    <property type="pathway name" value="Intra-Golgi traffic"/>
</dbReference>
<dbReference type="BioGRID-ORCS" id="853638">
    <property type="hits" value="2 hits in 10 CRISPR screens"/>
</dbReference>
<dbReference type="EvolutionaryTrace" id="P36015"/>
<dbReference type="PRO" id="PR:P36015"/>
<dbReference type="Proteomes" id="UP000002311">
    <property type="component" value="Chromosome XI"/>
</dbReference>
<dbReference type="RNAct" id="P36015">
    <property type="molecule type" value="protein"/>
</dbReference>
<dbReference type="GO" id="GO:0000421">
    <property type="term" value="C:autophagosome membrane"/>
    <property type="evidence" value="ECO:0000314"/>
    <property type="project" value="SGD"/>
</dbReference>
<dbReference type="GO" id="GO:0005829">
    <property type="term" value="C:cytosol"/>
    <property type="evidence" value="ECO:0007005"/>
    <property type="project" value="SGD"/>
</dbReference>
<dbReference type="GO" id="GO:0005789">
    <property type="term" value="C:endoplasmic reticulum membrane"/>
    <property type="evidence" value="ECO:0000303"/>
    <property type="project" value="ComplexPortal"/>
</dbReference>
<dbReference type="GO" id="GO:0005768">
    <property type="term" value="C:endosome"/>
    <property type="evidence" value="ECO:0000314"/>
    <property type="project" value="SGD"/>
</dbReference>
<dbReference type="GO" id="GO:0010008">
    <property type="term" value="C:endosome membrane"/>
    <property type="evidence" value="ECO:0000303"/>
    <property type="project" value="ComplexPortal"/>
</dbReference>
<dbReference type="GO" id="GO:0000324">
    <property type="term" value="C:fungal-type vacuole"/>
    <property type="evidence" value="ECO:0000314"/>
    <property type="project" value="SGD"/>
</dbReference>
<dbReference type="GO" id="GO:0005794">
    <property type="term" value="C:Golgi apparatus"/>
    <property type="evidence" value="ECO:0000314"/>
    <property type="project" value="SGD"/>
</dbReference>
<dbReference type="GO" id="GO:1990674">
    <property type="term" value="C:Golgi cis cisterna membrane"/>
    <property type="evidence" value="ECO:0000303"/>
    <property type="project" value="ComplexPortal"/>
</dbReference>
<dbReference type="GO" id="GO:0000139">
    <property type="term" value="C:Golgi membrane"/>
    <property type="evidence" value="ECO:0000303"/>
    <property type="project" value="ComplexPortal"/>
</dbReference>
<dbReference type="GO" id="GO:0016020">
    <property type="term" value="C:membrane"/>
    <property type="evidence" value="ECO:0000314"/>
    <property type="project" value="SGD"/>
</dbReference>
<dbReference type="GO" id="GO:0005739">
    <property type="term" value="C:mitochondrion"/>
    <property type="evidence" value="ECO:0007005"/>
    <property type="project" value="SGD"/>
</dbReference>
<dbReference type="GO" id="GO:0005886">
    <property type="term" value="C:plasma membrane"/>
    <property type="evidence" value="ECO:0007669"/>
    <property type="project" value="UniProtKB-SubCell"/>
</dbReference>
<dbReference type="GO" id="GO:0031201">
    <property type="term" value="C:SNARE complex"/>
    <property type="evidence" value="ECO:0000314"/>
    <property type="project" value="SGD"/>
</dbReference>
<dbReference type="GO" id="GO:0005774">
    <property type="term" value="C:vacuolar membrane"/>
    <property type="evidence" value="ECO:0000303"/>
    <property type="project" value="ComplexPortal"/>
</dbReference>
<dbReference type="GO" id="GO:0016409">
    <property type="term" value="F:palmitoyltransferase activity"/>
    <property type="evidence" value="ECO:0000314"/>
    <property type="project" value="SGD"/>
</dbReference>
<dbReference type="GO" id="GO:0005484">
    <property type="term" value="F:SNAP receptor activity"/>
    <property type="evidence" value="ECO:0000314"/>
    <property type="project" value="SGD"/>
</dbReference>
<dbReference type="GO" id="GO:0061911">
    <property type="term" value="P:amphisome-lysosome fusion"/>
    <property type="evidence" value="ECO:0000303"/>
    <property type="project" value="ComplexPortal"/>
</dbReference>
<dbReference type="GO" id="GO:0061909">
    <property type="term" value="P:autophagosome-lysosome fusion"/>
    <property type="evidence" value="ECO:0000314"/>
    <property type="project" value="SGD"/>
</dbReference>
<dbReference type="GO" id="GO:0006888">
    <property type="term" value="P:endoplasmic reticulum to Golgi vesicle-mediated transport"/>
    <property type="evidence" value="ECO:0000314"/>
    <property type="project" value="ComplexPortal"/>
</dbReference>
<dbReference type="GO" id="GO:0006895">
    <property type="term" value="P:Golgi to endosome transport"/>
    <property type="evidence" value="ECO:0000303"/>
    <property type="project" value="ComplexPortal"/>
</dbReference>
<dbReference type="GO" id="GO:0048210">
    <property type="term" value="P:Golgi vesicle fusion to target membrane"/>
    <property type="evidence" value="ECO:0000303"/>
    <property type="project" value="ComplexPortal"/>
</dbReference>
<dbReference type="GO" id="GO:0006891">
    <property type="term" value="P:intra-Golgi vesicle-mediated transport"/>
    <property type="evidence" value="ECO:0000315"/>
    <property type="project" value="SGD"/>
</dbReference>
<dbReference type="GO" id="GO:0006886">
    <property type="term" value="P:intracellular protein transport"/>
    <property type="evidence" value="ECO:0000314"/>
    <property type="project" value="ComplexPortal"/>
</dbReference>
<dbReference type="GO" id="GO:0042144">
    <property type="term" value="P:vacuole fusion, non-autophagic"/>
    <property type="evidence" value="ECO:0000315"/>
    <property type="project" value="SGD"/>
</dbReference>
<dbReference type="GO" id="GO:0006906">
    <property type="term" value="P:vesicle fusion"/>
    <property type="evidence" value="ECO:0000314"/>
    <property type="project" value="ComplexPortal"/>
</dbReference>
<dbReference type="GO" id="GO:0048280">
    <property type="term" value="P:vesicle fusion with Golgi apparatus"/>
    <property type="evidence" value="ECO:0000303"/>
    <property type="project" value="ComplexPortal"/>
</dbReference>
<dbReference type="CDD" id="cd14824">
    <property type="entry name" value="Longin"/>
    <property type="match status" value="1"/>
</dbReference>
<dbReference type="CDD" id="cd15867">
    <property type="entry name" value="R-SNARE_YKT6"/>
    <property type="match status" value="1"/>
</dbReference>
<dbReference type="FunFam" id="3.30.450.50:FF:000020">
    <property type="entry name" value="Synaptobrevin homolog YKT6"/>
    <property type="match status" value="1"/>
</dbReference>
<dbReference type="FunFam" id="1.20.5.110:FF:000020">
    <property type="entry name" value="synaptobrevin homolog YKT6"/>
    <property type="match status" value="1"/>
</dbReference>
<dbReference type="Gene3D" id="1.20.5.110">
    <property type="match status" value="1"/>
</dbReference>
<dbReference type="Gene3D" id="3.30.450.50">
    <property type="entry name" value="Longin domain"/>
    <property type="match status" value="1"/>
</dbReference>
<dbReference type="InterPro" id="IPR011012">
    <property type="entry name" value="Longin-like_dom_sf"/>
</dbReference>
<dbReference type="InterPro" id="IPR010908">
    <property type="entry name" value="Longin_dom"/>
</dbReference>
<dbReference type="InterPro" id="IPR045848">
    <property type="entry name" value="R-SNARE_YKT6"/>
</dbReference>
<dbReference type="InterPro" id="IPR001388">
    <property type="entry name" value="Synaptobrevin-like"/>
</dbReference>
<dbReference type="InterPro" id="IPR042855">
    <property type="entry name" value="V_SNARE_CC"/>
</dbReference>
<dbReference type="PANTHER" id="PTHR45806">
    <property type="entry name" value="SYNAPTOBREVIN HOMOLOG YKT6"/>
    <property type="match status" value="1"/>
</dbReference>
<dbReference type="PANTHER" id="PTHR45806:SF1">
    <property type="entry name" value="SYNAPTOBREVIN HOMOLOG YKT6"/>
    <property type="match status" value="1"/>
</dbReference>
<dbReference type="Pfam" id="PF13774">
    <property type="entry name" value="Longin"/>
    <property type="match status" value="1"/>
</dbReference>
<dbReference type="Pfam" id="PF00957">
    <property type="entry name" value="Synaptobrevin"/>
    <property type="match status" value="1"/>
</dbReference>
<dbReference type="PRINTS" id="PR00219">
    <property type="entry name" value="SYNAPTOBREVN"/>
</dbReference>
<dbReference type="SMART" id="SM01270">
    <property type="entry name" value="Longin"/>
    <property type="match status" value="1"/>
</dbReference>
<dbReference type="SUPFAM" id="SSF58038">
    <property type="entry name" value="SNARE fusion complex"/>
    <property type="match status" value="1"/>
</dbReference>
<dbReference type="SUPFAM" id="SSF64356">
    <property type="entry name" value="SNARE-like"/>
    <property type="match status" value="1"/>
</dbReference>
<dbReference type="PROSITE" id="PS50859">
    <property type="entry name" value="LONGIN"/>
    <property type="match status" value="1"/>
</dbReference>
<dbReference type="PROSITE" id="PS00417">
    <property type="entry name" value="SYNAPTOBREVIN"/>
    <property type="match status" value="1"/>
</dbReference>
<dbReference type="PROSITE" id="PS50892">
    <property type="entry name" value="V_SNARE"/>
    <property type="match status" value="1"/>
</dbReference>
<name>YKT6_YEAST</name>
<protein>
    <recommendedName>
        <fullName>Synaptobrevin homolog YKT6</fullName>
        <ecNumber>2.3.1.-</ecNumber>
    </recommendedName>
</protein>
<proteinExistence type="evidence at protein level"/>
<keyword id="KW-0002">3D-structure</keyword>
<keyword id="KW-1003">Cell membrane</keyword>
<keyword id="KW-0175">Coiled coil</keyword>
<keyword id="KW-0449">Lipoprotein</keyword>
<keyword id="KW-0472">Membrane</keyword>
<keyword id="KW-0488">Methylation</keyword>
<keyword id="KW-0564">Palmitate</keyword>
<keyword id="KW-0597">Phosphoprotein</keyword>
<keyword id="KW-0636">Prenylation</keyword>
<keyword id="KW-1185">Reference proteome</keyword>
<keyword id="KW-0808">Transferase</keyword>
<accession>P36015</accession>
<accession>D6VX04</accession>
<reference key="1">
    <citation type="journal article" date="1994" name="Nature">
        <title>Complete DNA sequence of yeast chromosome XI.</title>
        <authorList>
            <person name="Dujon B."/>
            <person name="Alexandraki D."/>
            <person name="Andre B."/>
            <person name="Ansorge W."/>
            <person name="Baladron V."/>
            <person name="Ballesta J.P.G."/>
            <person name="Banrevi A."/>
            <person name="Bolle P.-A."/>
            <person name="Bolotin-Fukuhara M."/>
            <person name="Bossier P."/>
            <person name="Bou G."/>
            <person name="Boyer J."/>
            <person name="Buitrago M.J."/>
            <person name="Cheret G."/>
            <person name="Colleaux L."/>
            <person name="Daignan-Fornier B."/>
            <person name="del Rey F."/>
            <person name="Dion C."/>
            <person name="Domdey H."/>
            <person name="Duesterhoeft A."/>
            <person name="Duesterhus S."/>
            <person name="Entian K.-D."/>
            <person name="Erfle H."/>
            <person name="Esteban P.F."/>
            <person name="Feldmann H."/>
            <person name="Fernandes L."/>
            <person name="Fobo G.M."/>
            <person name="Fritz C."/>
            <person name="Fukuhara H."/>
            <person name="Gabel C."/>
            <person name="Gaillon L."/>
            <person name="Garcia-Cantalejo J.M."/>
            <person name="Garcia-Ramirez J.J."/>
            <person name="Gent M.E."/>
            <person name="Ghazvini M."/>
            <person name="Goffeau A."/>
            <person name="Gonzalez A."/>
            <person name="Grothues D."/>
            <person name="Guerreiro P."/>
            <person name="Hegemann J.H."/>
            <person name="Hewitt N."/>
            <person name="Hilger F."/>
            <person name="Hollenberg C.P."/>
            <person name="Horaitis O."/>
            <person name="Indge K.J."/>
            <person name="Jacquier A."/>
            <person name="James C.M."/>
            <person name="Jauniaux J.-C."/>
            <person name="Jimenez A."/>
            <person name="Keuchel H."/>
            <person name="Kirchrath L."/>
            <person name="Kleine K."/>
            <person name="Koetter P."/>
            <person name="Legrain P."/>
            <person name="Liebl S."/>
            <person name="Louis E.J."/>
            <person name="Maia e Silva A."/>
            <person name="Marck C."/>
            <person name="Monnier A.-L."/>
            <person name="Moestl D."/>
            <person name="Mueller S."/>
            <person name="Obermaier B."/>
            <person name="Oliver S.G."/>
            <person name="Pallier C."/>
            <person name="Pascolo S."/>
            <person name="Pfeiffer F."/>
            <person name="Philippsen P."/>
            <person name="Planta R.J."/>
            <person name="Pohl F.M."/>
            <person name="Pohl T.M."/>
            <person name="Poehlmann R."/>
            <person name="Portetelle D."/>
            <person name="Purnelle B."/>
            <person name="Puzos V."/>
            <person name="Ramezani Rad M."/>
            <person name="Rasmussen S.W."/>
            <person name="Remacha M.A."/>
            <person name="Revuelta J.L."/>
            <person name="Richard G.-F."/>
            <person name="Rieger M."/>
            <person name="Rodrigues-Pousada C."/>
            <person name="Rose M."/>
            <person name="Rupp T."/>
            <person name="Santos M.A."/>
            <person name="Schwager C."/>
            <person name="Sensen C."/>
            <person name="Skala J."/>
            <person name="Soares H."/>
            <person name="Sor F."/>
            <person name="Stegemann J."/>
            <person name="Tettelin H."/>
            <person name="Thierry A."/>
            <person name="Tzermia M."/>
            <person name="Urrestarazu L.A."/>
            <person name="van Dyck L."/>
            <person name="van Vliet-Reedijk J.C."/>
            <person name="Valens M."/>
            <person name="Vandenbol M."/>
            <person name="Vilela C."/>
            <person name="Vissers S."/>
            <person name="von Wettstein D."/>
            <person name="Voss H."/>
            <person name="Wiemann S."/>
            <person name="Xu G."/>
            <person name="Zimmermann J."/>
            <person name="Haasemann M."/>
            <person name="Becker I."/>
            <person name="Mewes H.-W."/>
        </authorList>
    </citation>
    <scope>NUCLEOTIDE SEQUENCE [LARGE SCALE GENOMIC DNA]</scope>
    <source>
        <strain>ATCC 204508 / S288c</strain>
    </source>
</reference>
<reference key="2">
    <citation type="journal article" date="2014" name="G3 (Bethesda)">
        <title>The reference genome sequence of Saccharomyces cerevisiae: Then and now.</title>
        <authorList>
            <person name="Engel S.R."/>
            <person name="Dietrich F.S."/>
            <person name="Fisk D.G."/>
            <person name="Binkley G."/>
            <person name="Balakrishnan R."/>
            <person name="Costanzo M.C."/>
            <person name="Dwight S.S."/>
            <person name="Hitz B.C."/>
            <person name="Karra K."/>
            <person name="Nash R.S."/>
            <person name="Weng S."/>
            <person name="Wong E.D."/>
            <person name="Lloyd P."/>
            <person name="Skrzypek M.S."/>
            <person name="Miyasato S.R."/>
            <person name="Simison M."/>
            <person name="Cherry J.M."/>
        </authorList>
    </citation>
    <scope>GENOME REANNOTATION</scope>
    <source>
        <strain>ATCC 204508 / S288c</strain>
    </source>
</reference>
<reference key="3">
    <citation type="journal article" date="2007" name="Genome Res.">
        <title>Approaching a complete repository of sequence-verified protein-encoding clones for Saccharomyces cerevisiae.</title>
        <authorList>
            <person name="Hu Y."/>
            <person name="Rolfs A."/>
            <person name="Bhullar B."/>
            <person name="Murthy T.V.S."/>
            <person name="Zhu C."/>
            <person name="Berger M.F."/>
            <person name="Camargo A.A."/>
            <person name="Kelley F."/>
            <person name="McCarron S."/>
            <person name="Jepson D."/>
            <person name="Richardson A."/>
            <person name="Raphael J."/>
            <person name="Moreira D."/>
            <person name="Taycher E."/>
            <person name="Zuo D."/>
            <person name="Mohr S."/>
            <person name="Kane M.F."/>
            <person name="Williamson J."/>
            <person name="Simpson A.J.G."/>
            <person name="Bulyk M.L."/>
            <person name="Harlow E."/>
            <person name="Marsischky G."/>
            <person name="Kolodner R.D."/>
            <person name="LaBaer J."/>
        </authorList>
    </citation>
    <scope>NUCLEOTIDE SEQUENCE [GENOMIC DNA]</scope>
    <source>
        <strain>ATCC 204508 / S288c</strain>
    </source>
</reference>
<reference key="4">
    <citation type="journal article" date="2007" name="J. Proteome Res.">
        <title>Large-scale phosphorylation analysis of alpha-factor-arrested Saccharomyces cerevisiae.</title>
        <authorList>
            <person name="Li X."/>
            <person name="Gerber S.A."/>
            <person name="Rudner A.D."/>
            <person name="Beausoleil S.A."/>
            <person name="Haas W."/>
            <person name="Villen J."/>
            <person name="Elias J.E."/>
            <person name="Gygi S.P."/>
        </authorList>
    </citation>
    <scope>PHOSPHORYLATION [LARGE SCALE ANALYSIS] AT THR-158</scope>
    <scope>IDENTIFICATION BY MASS SPECTROMETRY [LARGE SCALE ANALYSIS]</scope>
    <source>
        <strain>ADR376</strain>
    </source>
</reference>
<reference key="5">
    <citation type="journal article" date="2008" name="Mol. Cell. Proteomics">
        <title>A multidimensional chromatography technology for in-depth phosphoproteome analysis.</title>
        <authorList>
            <person name="Albuquerque C.P."/>
            <person name="Smolka M.B."/>
            <person name="Payne S.H."/>
            <person name="Bafna V."/>
            <person name="Eng J."/>
            <person name="Zhou H."/>
        </authorList>
    </citation>
    <scope>IDENTIFICATION BY MASS SPECTROMETRY [LARGE SCALE ANALYSIS]</scope>
</reference>
<reference key="6">
    <citation type="journal article" date="2009" name="Science">
        <title>Global analysis of Cdk1 substrate phosphorylation sites provides insights into evolution.</title>
        <authorList>
            <person name="Holt L.J."/>
            <person name="Tuch B.B."/>
            <person name="Villen J."/>
            <person name="Johnson A.D."/>
            <person name="Gygi S.P."/>
            <person name="Morgan D.O."/>
        </authorList>
    </citation>
    <scope>PHOSPHORYLATION [LARGE SCALE ANALYSIS] AT THR-158</scope>
    <scope>IDENTIFICATION BY MASS SPECTROMETRY [LARGE SCALE ANALYSIS]</scope>
</reference>
<reference key="7">
    <citation type="journal article" date="2001" name="Science">
        <title>An autoinhibitory mechanism for nonsyntaxin SNARE proteins revealed by the structure of Ykt6p.</title>
        <authorList>
            <person name="Tochio H."/>
            <person name="Tsui M.M."/>
            <person name="Banfield D.K."/>
            <person name="Zhang M."/>
        </authorList>
    </citation>
    <scope>STRUCTURE BY NMR OF 1-140</scope>
</reference>